<organismHost>
    <name type="scientific">Ornithodoros</name>
    <name type="common">relapsing fever ticks</name>
    <dbReference type="NCBI Taxonomy" id="6937"/>
</organismHost>
<organismHost>
    <name type="scientific">Phacochoerus aethiopicus</name>
    <name type="common">Warthog</name>
    <dbReference type="NCBI Taxonomy" id="85517"/>
</organismHost>
<organismHost>
    <name type="scientific">Phacochoerus africanus</name>
    <name type="common">Warthog</name>
    <dbReference type="NCBI Taxonomy" id="41426"/>
</organismHost>
<organismHost>
    <name type="scientific">Potamochoerus larvatus</name>
    <name type="common">Bushpig</name>
    <dbReference type="NCBI Taxonomy" id="273792"/>
</organismHost>
<organismHost>
    <name type="scientific">Sus scrofa</name>
    <name type="common">Pig</name>
    <dbReference type="NCBI Taxonomy" id="9823"/>
</organismHost>
<comment type="function">
    <molecule>Polyprotein pp62</molecule>
    <text evidence="3">Essential for the correct assembly and maturation of the core of the virion.</text>
</comment>
<comment type="function">
    <molecule>p35</molecule>
    <text evidence="3">Component of the core shell (By similarity). Binds to phosphatidylserine, which may enable the core shell binding with the inner membrane (By similarity).</text>
</comment>
<comment type="function">
    <molecule>p15</molecule>
    <text evidence="3">Component of the core shell (By similarity). Binds to phosphatidylserine and DNA, which may link the core shell to the inner membrane and to the viral nucleoid (By similarity).</text>
</comment>
<comment type="function">
    <molecule>p8</molecule>
    <text evidence="3">Component of the core shell.</text>
</comment>
<comment type="subunit">
    <molecule>p35</molecule>
    <text evidence="3">Monomer (By similarity). Predominantly exists as a monomer, with very little dimers (By similarity). Homodimerization seems to be linked to low pH (By similarity).</text>
</comment>
<comment type="subunit">
    <molecule>p15</molecule>
    <text evidence="3">Homodimer; disulfide-linked (By similarity). Homotrimer; disulfide-linked (By similarity). Homohexamer (By similarity).</text>
</comment>
<comment type="subcellular location">
    <molecule>Polyprotein pp62</molecule>
    <subcellularLocation>
        <location evidence="3">Host cytoplasm</location>
        <location evidence="3">Host perinuclear region</location>
    </subcellularLocation>
    <text evidence="3">Found in perinuclear cytoplasmic viral factories during assembly.</text>
</comment>
<comment type="subcellular location">
    <molecule>p35</molecule>
    <subcellularLocation>
        <location evidence="3">Virion</location>
    </subcellularLocation>
    <text evidence="3">Located in the core shell, which functions like a matrix between the DNA and the inner envelope.</text>
</comment>
<comment type="subcellular location">
    <molecule>p15</molecule>
    <subcellularLocation>
        <location evidence="3">Virion</location>
    </subcellularLocation>
    <text evidence="3">Located in the core shell, which functions like a matrix between the DNA and the inner envelope.</text>
</comment>
<comment type="subcellular location">
    <molecule>p8</molecule>
    <subcellularLocation>
        <location evidence="3">Virion</location>
    </subcellularLocation>
    <text evidence="3">Located in the core shell, which functions like a matrix between the DNA and the inner envelope.</text>
</comment>
<comment type="induction">
    <text evidence="3">Expressed in the late phase of the viral replicative cycle.</text>
</comment>
<comment type="PTM">
    <molecule>p15</molecule>
    <text evidence="2">Monoubiquitinated in vitro by viral UBCv1.</text>
</comment>
<comment type="PTM">
    <molecule>Polyprotein pp62</molecule>
    <text evidence="3">Specific enzymatic cleavages in vivo yield mature proteins.</text>
</comment>
<comment type="similarity">
    <text evidence="4">Belongs to the asfivirus polyprotein pp62 family.</text>
</comment>
<protein>
    <recommendedName>
        <fullName evidence="3">Polyprotein pp62</fullName>
    </recommendedName>
    <alternativeName>
        <fullName>60 kDa polyprotein</fullName>
        <shortName>p60</shortName>
    </alternativeName>
    <alternativeName>
        <fullName>62 kDa polyprotein</fullName>
        <shortName>p62</shortName>
    </alternativeName>
    <component>
        <recommendedName>
            <fullName evidence="3">p15</fullName>
        </recommendedName>
        <alternativeName>
            <fullName>PIG1</fullName>
        </alternativeName>
    </component>
    <component>
        <recommendedName>
            <fullName evidence="3">p35</fullName>
        </recommendedName>
    </component>
    <component>
        <recommendedName>
            <fullName evidence="3">p8</fullName>
        </recommendedName>
    </component>
</protein>
<gene>
    <name type="ordered locus">War-104</name>
</gene>
<evidence type="ECO:0000250" key="1"/>
<evidence type="ECO:0000250" key="2">
    <source>
        <dbReference type="UniProtKB" id="P0CA06"/>
    </source>
</evidence>
<evidence type="ECO:0000250" key="3">
    <source>
        <dbReference type="UniProtKB" id="Q65179"/>
    </source>
</evidence>
<evidence type="ECO:0000305" key="4"/>
<dbReference type="EMBL" id="AY261366">
    <property type="status" value="NOT_ANNOTATED_CDS"/>
    <property type="molecule type" value="Genomic_DNA"/>
</dbReference>
<dbReference type="SMR" id="P0CA08"/>
<dbReference type="Proteomes" id="UP000000858">
    <property type="component" value="Segment"/>
</dbReference>
<dbReference type="GO" id="GO:0044220">
    <property type="term" value="C:host cell perinuclear region of cytoplasm"/>
    <property type="evidence" value="ECO:0007669"/>
    <property type="project" value="UniProtKB-SubCell"/>
</dbReference>
<dbReference type="GO" id="GO:0044423">
    <property type="term" value="C:virion component"/>
    <property type="evidence" value="ECO:0007669"/>
    <property type="project" value="UniProtKB-KW"/>
</dbReference>
<organism>
    <name type="scientific">African swine fever virus (isolate Warthog/Namibia/Wart80/1980)</name>
    <name type="common">ASFV</name>
    <dbReference type="NCBI Taxonomy" id="561444"/>
    <lineage>
        <taxon>Viruses</taxon>
        <taxon>Varidnaviria</taxon>
        <taxon>Bamfordvirae</taxon>
        <taxon>Nucleocytoviricota</taxon>
        <taxon>Pokkesviricetes</taxon>
        <taxon>Asfuvirales</taxon>
        <taxon>Asfarviridae</taxon>
        <taxon>Asfivirus</taxon>
        <taxon>African swine fever virus</taxon>
    </lineage>
</organism>
<feature type="initiator methionine" description="Removed" evidence="1">
    <location>
        <position position="1"/>
    </location>
</feature>
<feature type="chain" id="PRO_0000373461" description="Polyprotein pp62" evidence="1">
    <location>
        <begin position="2"/>
        <end position="530"/>
    </location>
</feature>
<feature type="chain" id="PRO_0000373462" description="p15">
    <location>
        <begin position="2"/>
        <end position="158"/>
    </location>
</feature>
<feature type="chain" id="PRO_0000373463" description="p35">
    <location>
        <begin position="159"/>
        <end position="463"/>
    </location>
</feature>
<feature type="chain" id="PRO_0000373464" description="p8">
    <location>
        <begin position="464"/>
        <end position="530"/>
    </location>
</feature>
<feature type="site" description="Cleavage; by viral protease S273R" evidence="3">
    <location>
        <begin position="158"/>
        <end position="159"/>
    </location>
</feature>
<feature type="site" description="Cleavage; by viral protease S273R" evidence="3">
    <location>
        <begin position="463"/>
        <end position="464"/>
    </location>
</feature>
<name>PP62_ASFWA</name>
<accession>P0CA08</accession>
<keyword id="KW-1015">Disulfide bond</keyword>
<keyword id="KW-1035">Host cytoplasm</keyword>
<keyword id="KW-0426">Late protein</keyword>
<keyword id="KW-0832">Ubl conjugation</keyword>
<keyword id="KW-0946">Virion</keyword>
<proteinExistence type="inferred from homology"/>
<reference key="1">
    <citation type="submission" date="2003-03" db="EMBL/GenBank/DDBJ databases">
        <title>African swine fever virus genomes.</title>
        <authorList>
            <person name="Kutish G.F."/>
            <person name="Rock D.L."/>
        </authorList>
    </citation>
    <scope>NUCLEOTIDE SEQUENCE [LARGE SCALE GENOMIC DNA]</scope>
</reference>
<sequence>MPSNMKQFCKISVWLQQHDPDLLEIINNLCMLGNLSAAKYKHGVTFIYPKQAKIRDEIKKHAYSNDPSQAIKTLESLILPFYIPTPAEFTGEIGSYTGVKLEVEKTEANKVILKNGEAVLVPAADFKPFPDRRLAVWIMESGSMPLEGPPYKRKKEGGGNDPPVPKHISPYTPRTRIAIEVEKAFDDCMRQNWCSVNNPYLAKSVSLLSFLSLNHPTEFIKVLPLIDFDPLVTFYLLLEPYKTHGDDFLIPETILFGPTGWNGTDLYQSAMLEFKKFFTQITRQTFMDIADSATKEVDVPICYSDPETVHSYTNHVRTEILHHNAVNKVTTPNLVVQAYNELEQTNTIRHYGPIFPESTINALRFWKKLWQDEQRFVIHGLHRTLMDQPTYETSEFAEIVRNLRFSRPGNNYINELNITSPAMYGDKHTTGDIAPNDRFAMLVAFINSTDFLYTAIPEEKVGGNETQTSSLTDLVPTRLHSFLNHNLSKLKILNRAQQTVRNILSNDCLNQLKHYVKHTGKNEILKLLQE</sequence>